<gene>
    <name type="primary">FADS2</name>
</gene>
<feature type="chain" id="PRO_0000307104" description="Acyl-CoA 6-desaturase">
    <location>
        <begin position="1"/>
        <end position="444"/>
    </location>
</feature>
<feature type="topological domain" description="Cytoplasmic" evidence="6">
    <location>
        <begin position="1"/>
        <end position="131"/>
    </location>
</feature>
<feature type="transmembrane region" description="Helical" evidence="4">
    <location>
        <begin position="132"/>
        <end position="152"/>
    </location>
</feature>
<feature type="topological domain" description="Lumenal" evidence="6">
    <location>
        <begin position="153"/>
        <end position="157"/>
    </location>
</feature>
<feature type="transmembrane region" description="Helical" evidence="4">
    <location>
        <begin position="158"/>
        <end position="178"/>
    </location>
</feature>
<feature type="topological domain" description="Cytoplasmic" evidence="6">
    <location>
        <begin position="179"/>
        <end position="264"/>
    </location>
</feature>
<feature type="transmembrane region" description="Helical" evidence="4">
    <location>
        <begin position="265"/>
        <end position="285"/>
    </location>
</feature>
<feature type="topological domain" description="Lumenal" evidence="6">
    <location>
        <begin position="286"/>
        <end position="305"/>
    </location>
</feature>
<feature type="transmembrane region" description="Helical" evidence="4">
    <location>
        <begin position="306"/>
        <end position="326"/>
    </location>
</feature>
<feature type="topological domain" description="Cytoplasmic" evidence="6">
    <location>
        <begin position="327"/>
        <end position="444"/>
    </location>
</feature>
<feature type="domain" description="Cytochrome b5 heme-binding" evidence="5">
    <location>
        <begin position="18"/>
        <end position="95"/>
    </location>
</feature>
<feature type="short sequence motif" description="Histidine box-1">
    <location>
        <begin position="180"/>
        <end position="184"/>
    </location>
</feature>
<feature type="short sequence motif" description="Histidine box-2">
    <location>
        <begin position="217"/>
        <end position="221"/>
    </location>
</feature>
<feature type="short sequence motif" description="Histidine box-3">
    <location>
        <begin position="382"/>
        <end position="386"/>
    </location>
</feature>
<organism>
    <name type="scientific">Pongo abelii</name>
    <name type="common">Sumatran orangutan</name>
    <name type="synonym">Pongo pygmaeus abelii</name>
    <dbReference type="NCBI Taxonomy" id="9601"/>
    <lineage>
        <taxon>Eukaryota</taxon>
        <taxon>Metazoa</taxon>
        <taxon>Chordata</taxon>
        <taxon>Craniata</taxon>
        <taxon>Vertebrata</taxon>
        <taxon>Euteleostomi</taxon>
        <taxon>Mammalia</taxon>
        <taxon>Eutheria</taxon>
        <taxon>Euarchontoglires</taxon>
        <taxon>Primates</taxon>
        <taxon>Haplorrhini</taxon>
        <taxon>Catarrhini</taxon>
        <taxon>Hominidae</taxon>
        <taxon>Pongo</taxon>
    </lineage>
</organism>
<comment type="function">
    <text evidence="1 2 3">Involved in the biosynthesis of highly unsaturated fatty acids (HUFA) from the essential polyunsaturated fatty acids (PUFA) linoleic acid (LA) (18:2n-6) and alpha-linolenic acid (ALA) (18:3n-3) precursors, acting as a fatty acyl-coenzyme A (CoA) desaturase that introduces a cis double bond at carbon 6 of the fatty acyl chain. Catalyzes the first and rate limiting step in this pathway which is the desaturation of LA (18:2n-6) and ALA (18:3n-3) into gamma-linoleate (GLA) (18:3n-6) and stearidonate (18:4n-3), respectively (By similarity). Subsequently, in the biosynthetic pathway of HUFA n-3 series, it desaturates tetracosapentaenoate (24:5n-3) to tetracosahexaenoate (24:6n-3), which is then converted to docosahexaenoate (DHA)(22:6n-3), an important lipid for nervous system function (By similarity). It can also desaturate (11E)-octadecenoate (trans-vaccenoate) at carbon 6 generating (6Z,11E)-octadecadienoate (By similarity). In addition to Delta-6 activity, this enzyme exhibits Delta-8 activity with slight biases toward n-3 fatty acyl-CoA substrates (By similarity).</text>
</comment>
<comment type="catalytic activity">
    <reaction evidence="2">
        <text>(9Z,12Z)-octadecadienoyl-CoA + 2 Fe(II)-[cytochrome b5] + O2 + 2 H(+) = (6Z,9Z,12Z)-octadecatrienoyl-CoA + 2 Fe(III)-[cytochrome b5] + 2 H2O</text>
        <dbReference type="Rhea" id="RHEA:47140"/>
        <dbReference type="Rhea" id="RHEA-COMP:10438"/>
        <dbReference type="Rhea" id="RHEA-COMP:10439"/>
        <dbReference type="ChEBI" id="CHEBI:15377"/>
        <dbReference type="ChEBI" id="CHEBI:15378"/>
        <dbReference type="ChEBI" id="CHEBI:15379"/>
        <dbReference type="ChEBI" id="CHEBI:29033"/>
        <dbReference type="ChEBI" id="CHEBI:29034"/>
        <dbReference type="ChEBI" id="CHEBI:57363"/>
        <dbReference type="ChEBI" id="CHEBI:57383"/>
        <dbReference type="EC" id="1.14.19.3"/>
    </reaction>
    <physiologicalReaction direction="left-to-right" evidence="2">
        <dbReference type="Rhea" id="RHEA:47141"/>
    </physiologicalReaction>
</comment>
<comment type="catalytic activity">
    <reaction evidence="2">
        <text>(9Z,12Z,15Z)-octadecatrienoyl-CoA + 2 Fe(II)-[cytochrome b5] + O2 + 2 H(+) = (6Z,9Z,12Z,15Z)-octadecatetraenoyl-CoA + 2 Fe(III)-[cytochrome b5] + 2 H2O</text>
        <dbReference type="Rhea" id="RHEA:47144"/>
        <dbReference type="Rhea" id="RHEA-COMP:10438"/>
        <dbReference type="Rhea" id="RHEA-COMP:10439"/>
        <dbReference type="ChEBI" id="CHEBI:15377"/>
        <dbReference type="ChEBI" id="CHEBI:15378"/>
        <dbReference type="ChEBI" id="CHEBI:15379"/>
        <dbReference type="ChEBI" id="CHEBI:29033"/>
        <dbReference type="ChEBI" id="CHEBI:29034"/>
        <dbReference type="ChEBI" id="CHEBI:71489"/>
        <dbReference type="ChEBI" id="CHEBI:74034"/>
        <dbReference type="EC" id="1.14.19.3"/>
    </reaction>
    <physiologicalReaction direction="left-to-right" evidence="2">
        <dbReference type="Rhea" id="RHEA:47145"/>
    </physiologicalReaction>
</comment>
<comment type="catalytic activity">
    <reaction evidence="3">
        <text>(9Z,12Z,15Z,18Z,21Z)-tetracosapentaenoyl-CoA + 2 Fe(II)-[cytochrome b5] + O2 + 2 H(+) = (6Z,9Z,12Z,15Z,18Z,21Z)-tetracosahexaenoyl-CoA + 2 Fe(III)-[cytochrome b5] + 2 H2O</text>
        <dbReference type="Rhea" id="RHEA:36999"/>
        <dbReference type="Rhea" id="RHEA-COMP:10438"/>
        <dbReference type="Rhea" id="RHEA-COMP:10439"/>
        <dbReference type="ChEBI" id="CHEBI:15377"/>
        <dbReference type="ChEBI" id="CHEBI:15378"/>
        <dbReference type="ChEBI" id="CHEBI:15379"/>
        <dbReference type="ChEBI" id="CHEBI:29033"/>
        <dbReference type="ChEBI" id="CHEBI:29034"/>
        <dbReference type="ChEBI" id="CHEBI:74083"/>
        <dbReference type="ChEBI" id="CHEBI:74086"/>
    </reaction>
    <physiologicalReaction direction="left-to-right" evidence="3">
        <dbReference type="Rhea" id="RHEA:37000"/>
    </physiologicalReaction>
</comment>
<comment type="catalytic activity">
    <reaction evidence="3">
        <text>(11E)-octadecenoyl-CoA + 2 Fe(II)-[cytochrome b5] + O2 + 2 H(+) = (6Z,11E)-octadecadienoyl-CoA + 2 Fe(III)-[cytochrome b5] + 2 H2O</text>
        <dbReference type="Rhea" id="RHEA:46064"/>
        <dbReference type="Rhea" id="RHEA-COMP:10438"/>
        <dbReference type="Rhea" id="RHEA-COMP:10439"/>
        <dbReference type="ChEBI" id="CHEBI:15377"/>
        <dbReference type="ChEBI" id="CHEBI:15378"/>
        <dbReference type="ChEBI" id="CHEBI:15379"/>
        <dbReference type="ChEBI" id="CHEBI:29033"/>
        <dbReference type="ChEBI" id="CHEBI:29034"/>
        <dbReference type="ChEBI" id="CHEBI:74296"/>
        <dbReference type="ChEBI" id="CHEBI:85652"/>
    </reaction>
    <physiologicalReaction direction="left-to-right" evidence="3">
        <dbReference type="Rhea" id="RHEA:46065"/>
    </physiologicalReaction>
</comment>
<comment type="catalytic activity">
    <reaction evidence="1">
        <text>(11Z,14Z)-eicosadienoyl-CoA + 2 Fe(II)-[cytochrome b5] + O2 + 2 H(+) = (8Z,11Z,14Z)-eicosatrienoyl-CoA + 2 Fe(III)-[cytochrome b5] + 2 H2O</text>
        <dbReference type="Rhea" id="RHEA:39567"/>
        <dbReference type="Rhea" id="RHEA-COMP:10438"/>
        <dbReference type="Rhea" id="RHEA-COMP:10439"/>
        <dbReference type="ChEBI" id="CHEBI:15377"/>
        <dbReference type="ChEBI" id="CHEBI:15378"/>
        <dbReference type="ChEBI" id="CHEBI:15379"/>
        <dbReference type="ChEBI" id="CHEBI:29033"/>
        <dbReference type="ChEBI" id="CHEBI:29034"/>
        <dbReference type="ChEBI" id="CHEBI:74264"/>
        <dbReference type="ChEBI" id="CHEBI:76410"/>
    </reaction>
    <physiologicalReaction direction="left-to-right" evidence="1">
        <dbReference type="Rhea" id="RHEA:39568"/>
    </physiologicalReaction>
</comment>
<comment type="catalytic activity">
    <reaction evidence="1">
        <text>(11Z,14Z,17Z)-eicosatrienoyl-CoA + 2 Fe(II)-[cytochrome b5] + O2 + 2 H(+) = (8Z,11Z,14Z,17Z)-eicosatetraenoyl-CoA + 2 Fe(III)-[cytochrome b5] + 2 H2O</text>
        <dbReference type="Rhea" id="RHEA:39571"/>
        <dbReference type="Rhea" id="RHEA-COMP:10438"/>
        <dbReference type="Rhea" id="RHEA-COMP:10439"/>
        <dbReference type="ChEBI" id="CHEBI:15377"/>
        <dbReference type="ChEBI" id="CHEBI:15378"/>
        <dbReference type="ChEBI" id="CHEBI:15379"/>
        <dbReference type="ChEBI" id="CHEBI:29033"/>
        <dbReference type="ChEBI" id="CHEBI:29034"/>
        <dbReference type="ChEBI" id="CHEBI:74265"/>
        <dbReference type="ChEBI" id="CHEBI:74328"/>
    </reaction>
    <physiologicalReaction direction="left-to-right" evidence="1">
        <dbReference type="Rhea" id="RHEA:39572"/>
    </physiologicalReaction>
</comment>
<comment type="pathway">
    <text evidence="2">Lipid metabolism; polyunsaturated fatty acid biosynthesis.</text>
</comment>
<comment type="subcellular location">
    <subcellularLocation>
        <location evidence="6">Endoplasmic reticulum membrane</location>
        <topology evidence="4">Multi-pass membrane protein</topology>
    </subcellularLocation>
</comment>
<comment type="domain">
    <text evidence="2">The protein sequence includes a number of characteristic features of microsomal fatty acid desaturases including the three histidine boxes HXXXH, HXXHH, and QXXHH (these domains may contain the active site and/or be involved in metal ion binding), and the N-terminal cytochrome b5 domain containing the heme-binding motif, HPGG, similar to that of other fatty acid desaturases.</text>
</comment>
<comment type="similarity">
    <text evidence="6">Belongs to the fatty acid desaturase type 1 family.</text>
</comment>
<protein>
    <recommendedName>
        <fullName evidence="6">Acyl-CoA 6-desaturase</fullName>
        <ecNumber evidence="2">1.14.19.3</ecNumber>
    </recommendedName>
    <alternativeName>
        <fullName>Delta(6) fatty acid desaturase</fullName>
        <shortName>D6D</shortName>
        <shortName>Delta(6) desaturase</shortName>
        <shortName evidence="2">Delta-6 desaturase</shortName>
    </alternativeName>
    <alternativeName>
        <fullName evidence="2">Fatty acid desaturase 2</fullName>
    </alternativeName>
</protein>
<dbReference type="EC" id="1.14.19.3" evidence="2"/>
<dbReference type="EMBL" id="CR857625">
    <property type="protein sequence ID" value="CAH89900.1"/>
    <property type="molecule type" value="mRNA"/>
</dbReference>
<dbReference type="RefSeq" id="NP_001128974.1">
    <property type="nucleotide sequence ID" value="NM_001135502.1"/>
</dbReference>
<dbReference type="SMR" id="Q5REA7"/>
<dbReference type="FunCoup" id="Q5REA7">
    <property type="interactions" value="650"/>
</dbReference>
<dbReference type="STRING" id="9601.ENSPPYP00000003667"/>
<dbReference type="Ensembl" id="ENSPPYT00000044865.1">
    <property type="protein sequence ID" value="ENSPPYP00000028415.1"/>
    <property type="gene ID" value="ENSPPYG00000003177.3"/>
</dbReference>
<dbReference type="GeneID" id="100190814"/>
<dbReference type="KEGG" id="pon:100190814"/>
<dbReference type="CTD" id="9415"/>
<dbReference type="eggNOG" id="KOG4232">
    <property type="taxonomic scope" value="Eukaryota"/>
</dbReference>
<dbReference type="GeneTree" id="ENSGT00950000182990"/>
<dbReference type="HOGENOM" id="CLU_016265_0_1_1"/>
<dbReference type="InParanoid" id="Q5REA7"/>
<dbReference type="OMA" id="QWWKNKH"/>
<dbReference type="OrthoDB" id="260091at2759"/>
<dbReference type="TreeFam" id="TF313604"/>
<dbReference type="UniPathway" id="UPA00658"/>
<dbReference type="Proteomes" id="UP000001595">
    <property type="component" value="Chromosome 11"/>
</dbReference>
<dbReference type="GO" id="GO:0005789">
    <property type="term" value="C:endoplasmic reticulum membrane"/>
    <property type="evidence" value="ECO:0007669"/>
    <property type="project" value="UniProtKB-SubCell"/>
</dbReference>
<dbReference type="GO" id="GO:0016213">
    <property type="term" value="F:acyl-CoA 6-desaturase activity"/>
    <property type="evidence" value="ECO:0007669"/>
    <property type="project" value="UniProtKB-EC"/>
</dbReference>
<dbReference type="GO" id="GO:0004768">
    <property type="term" value="F:stearoyl-CoA 9-desaturase activity"/>
    <property type="evidence" value="ECO:0007669"/>
    <property type="project" value="Ensembl"/>
</dbReference>
<dbReference type="GO" id="GO:0036109">
    <property type="term" value="P:alpha-linolenic acid metabolic process"/>
    <property type="evidence" value="ECO:0007669"/>
    <property type="project" value="Ensembl"/>
</dbReference>
<dbReference type="GO" id="GO:1901570">
    <property type="term" value="P:fatty acid derivative biosynthetic process"/>
    <property type="evidence" value="ECO:0007669"/>
    <property type="project" value="Ensembl"/>
</dbReference>
<dbReference type="GO" id="GO:0043651">
    <property type="term" value="P:linoleic acid metabolic process"/>
    <property type="evidence" value="ECO:0007669"/>
    <property type="project" value="Ensembl"/>
</dbReference>
<dbReference type="GO" id="GO:0042759">
    <property type="term" value="P:long-chain fatty acid biosynthetic process"/>
    <property type="evidence" value="ECO:0007669"/>
    <property type="project" value="Ensembl"/>
</dbReference>
<dbReference type="GO" id="GO:0006636">
    <property type="term" value="P:unsaturated fatty acid biosynthetic process"/>
    <property type="evidence" value="ECO:0007669"/>
    <property type="project" value="UniProtKB-UniPathway"/>
</dbReference>
<dbReference type="CDD" id="cd03506">
    <property type="entry name" value="Delta6-FADS-like"/>
    <property type="match status" value="1"/>
</dbReference>
<dbReference type="FunFam" id="3.10.120.10:FF:000010">
    <property type="entry name" value="Delta-6 fatty acyl desaturase"/>
    <property type="match status" value="1"/>
</dbReference>
<dbReference type="Gene3D" id="3.10.120.10">
    <property type="entry name" value="Cytochrome b5-like heme/steroid binding domain"/>
    <property type="match status" value="1"/>
</dbReference>
<dbReference type="InterPro" id="IPR001199">
    <property type="entry name" value="Cyt_B5-like_heme/steroid-bd"/>
</dbReference>
<dbReference type="InterPro" id="IPR036400">
    <property type="entry name" value="Cyt_B5-like_heme/steroid_sf"/>
</dbReference>
<dbReference type="InterPro" id="IPR005804">
    <property type="entry name" value="FA_desaturase_dom"/>
</dbReference>
<dbReference type="InterPro" id="IPR012171">
    <property type="entry name" value="Fatty_acid_desaturase"/>
</dbReference>
<dbReference type="PANTHER" id="PTHR19353:SF12">
    <property type="entry name" value="ACYL-COA 6-DESATURASE"/>
    <property type="match status" value="1"/>
</dbReference>
<dbReference type="PANTHER" id="PTHR19353">
    <property type="entry name" value="FATTY ACID DESATURASE 2"/>
    <property type="match status" value="1"/>
</dbReference>
<dbReference type="Pfam" id="PF00173">
    <property type="entry name" value="Cyt-b5"/>
    <property type="match status" value="1"/>
</dbReference>
<dbReference type="Pfam" id="PF00487">
    <property type="entry name" value="FA_desaturase"/>
    <property type="match status" value="1"/>
</dbReference>
<dbReference type="PIRSF" id="PIRSF015921">
    <property type="entry name" value="FA_sphinglp_des"/>
    <property type="match status" value="1"/>
</dbReference>
<dbReference type="SMART" id="SM01117">
    <property type="entry name" value="Cyt-b5"/>
    <property type="match status" value="1"/>
</dbReference>
<dbReference type="SUPFAM" id="SSF55856">
    <property type="entry name" value="Cytochrome b5-like heme/steroid binding domain"/>
    <property type="match status" value="1"/>
</dbReference>
<dbReference type="PROSITE" id="PS50255">
    <property type="entry name" value="CYTOCHROME_B5_2"/>
    <property type="match status" value="1"/>
</dbReference>
<accession>Q5REA7</accession>
<proteinExistence type="evidence at transcript level"/>
<sequence length="444" mass="52263">MGKGGNQGEGAAEREVSVPTFSWEEIQKHNLRTDRWLVIDRKVYNITKWSIQHPGGQRVIGHYAGEDATDAFRAFHPDLEFVGKFLKPLLIGELAPEEPSQDHGKNSKITEDFRALRKTAEDMNLFKTNHVFFLLLLAHIIALESIAWFTVFYFGNGWISTLITAFVLATSQAQAGWLQHDYGHLSVYRKPKWNHLVHKFVIGHLKGASANWWNHRHFQHHAKPNIFHKDPDVNMLHVFVLGEWQPIEYGKKKLKYLPYNHQHEYFFLIGPPLLIPMYFQYQIIMTMIVHKNWVDLAWAISYYIRFFITYIPFYGILGALLFLNFIRFLESHWFVWVTQMNHIVMEIDQEAYRDWFSSQLTATCNVEQSFFNDWFSGHLNFQIEHHLFPTMPRHNLHKIAPLVKSLCAKHGIEYQEKPLLRALLDIIRSLKKSGKLWLDAYLHK</sequence>
<reference key="1">
    <citation type="submission" date="2004-11" db="EMBL/GenBank/DDBJ databases">
        <authorList>
            <consortium name="The German cDNA consortium"/>
        </authorList>
    </citation>
    <scope>NUCLEOTIDE SEQUENCE [LARGE SCALE MRNA]</scope>
    <source>
        <tissue>Brain cortex</tissue>
    </source>
</reference>
<name>FADS2_PONAB</name>
<keyword id="KW-0249">Electron transport</keyword>
<keyword id="KW-0256">Endoplasmic reticulum</keyword>
<keyword id="KW-0275">Fatty acid biosynthesis</keyword>
<keyword id="KW-0276">Fatty acid metabolism</keyword>
<keyword id="KW-0444">Lipid biosynthesis</keyword>
<keyword id="KW-0443">Lipid metabolism</keyword>
<keyword id="KW-0472">Membrane</keyword>
<keyword id="KW-0560">Oxidoreductase</keyword>
<keyword id="KW-1185">Reference proteome</keyword>
<keyword id="KW-0812">Transmembrane</keyword>
<keyword id="KW-1133">Transmembrane helix</keyword>
<keyword id="KW-0813">Transport</keyword>
<evidence type="ECO:0000250" key="1">
    <source>
        <dbReference type="UniProtKB" id="B8R1K0"/>
    </source>
</evidence>
<evidence type="ECO:0000250" key="2">
    <source>
        <dbReference type="UniProtKB" id="O95864"/>
    </source>
</evidence>
<evidence type="ECO:0000250" key="3">
    <source>
        <dbReference type="UniProtKB" id="Q9Z122"/>
    </source>
</evidence>
<evidence type="ECO:0000255" key="4"/>
<evidence type="ECO:0000255" key="5">
    <source>
        <dbReference type="PROSITE-ProRule" id="PRU00279"/>
    </source>
</evidence>
<evidence type="ECO:0000305" key="6"/>